<evidence type="ECO:0000255" key="1">
    <source>
        <dbReference type="HAMAP-Rule" id="MF_00274"/>
    </source>
</evidence>
<evidence type="ECO:0000256" key="2">
    <source>
        <dbReference type="SAM" id="MobiDB-lite"/>
    </source>
</evidence>
<reference key="1">
    <citation type="journal article" date="2001" name="Nature">
        <title>Massive gene decay in the leprosy bacillus.</title>
        <authorList>
            <person name="Cole S.T."/>
            <person name="Eiglmeier K."/>
            <person name="Parkhill J."/>
            <person name="James K.D."/>
            <person name="Thomson N.R."/>
            <person name="Wheeler P.R."/>
            <person name="Honore N."/>
            <person name="Garnier T."/>
            <person name="Churcher C.M."/>
            <person name="Harris D.E."/>
            <person name="Mungall K.L."/>
            <person name="Basham D."/>
            <person name="Brown D."/>
            <person name="Chillingworth T."/>
            <person name="Connor R."/>
            <person name="Davies R.M."/>
            <person name="Devlin K."/>
            <person name="Duthoy S."/>
            <person name="Feltwell T."/>
            <person name="Fraser A."/>
            <person name="Hamlin N."/>
            <person name="Holroyd S."/>
            <person name="Hornsby T."/>
            <person name="Jagels K."/>
            <person name="Lacroix C."/>
            <person name="Maclean J."/>
            <person name="Moule S."/>
            <person name="Murphy L.D."/>
            <person name="Oliver K."/>
            <person name="Quail M.A."/>
            <person name="Rajandream M.A."/>
            <person name="Rutherford K.M."/>
            <person name="Rutter S."/>
            <person name="Seeger K."/>
            <person name="Simon S."/>
            <person name="Simmonds M."/>
            <person name="Skelton J."/>
            <person name="Squares R."/>
            <person name="Squares S."/>
            <person name="Stevens K."/>
            <person name="Taylor K."/>
            <person name="Whitehead S."/>
            <person name="Woodward J.R."/>
            <person name="Barrell B.G."/>
        </authorList>
    </citation>
    <scope>NUCLEOTIDE SEQUENCE [LARGE SCALE GENOMIC DNA]</scope>
    <source>
        <strain>TN</strain>
    </source>
</reference>
<accession>O69519</accession>
<protein>
    <recommendedName>
        <fullName evidence="1">Nucleoid-associated protein ML2330</fullName>
    </recommendedName>
</protein>
<gene>
    <name type="ordered locus">ML2330</name>
    <name type="ORF">MLCB2407.20</name>
</gene>
<dbReference type="EMBL" id="AL023596">
    <property type="protein sequence ID" value="CAA19160.1"/>
    <property type="molecule type" value="Genomic_DNA"/>
</dbReference>
<dbReference type="EMBL" id="AL583925">
    <property type="protein sequence ID" value="CAC31846.1"/>
    <property type="molecule type" value="Genomic_DNA"/>
</dbReference>
<dbReference type="PIR" id="F87200">
    <property type="entry name" value="F87200"/>
</dbReference>
<dbReference type="RefSeq" id="NP_302516.1">
    <property type="nucleotide sequence ID" value="NC_002677.1"/>
</dbReference>
<dbReference type="RefSeq" id="WP_010908836.1">
    <property type="nucleotide sequence ID" value="NC_002677.1"/>
</dbReference>
<dbReference type="SMR" id="O69519"/>
<dbReference type="STRING" id="272631.gene:17576191"/>
<dbReference type="KEGG" id="mle:ML2330"/>
<dbReference type="PATRIC" id="fig|272631.5.peg.4459"/>
<dbReference type="Leproma" id="ML2330"/>
<dbReference type="eggNOG" id="COG0718">
    <property type="taxonomic scope" value="Bacteria"/>
</dbReference>
<dbReference type="HOGENOM" id="CLU_140930_4_0_11"/>
<dbReference type="OrthoDB" id="9809370at2"/>
<dbReference type="Proteomes" id="UP000000806">
    <property type="component" value="Chromosome"/>
</dbReference>
<dbReference type="GO" id="GO:0043590">
    <property type="term" value="C:bacterial nucleoid"/>
    <property type="evidence" value="ECO:0007669"/>
    <property type="project" value="UniProtKB-UniRule"/>
</dbReference>
<dbReference type="GO" id="GO:0005829">
    <property type="term" value="C:cytosol"/>
    <property type="evidence" value="ECO:0007669"/>
    <property type="project" value="TreeGrafter"/>
</dbReference>
<dbReference type="GO" id="GO:0003677">
    <property type="term" value="F:DNA binding"/>
    <property type="evidence" value="ECO:0007669"/>
    <property type="project" value="UniProtKB-UniRule"/>
</dbReference>
<dbReference type="Gene3D" id="3.30.1310.10">
    <property type="entry name" value="Nucleoid-associated protein YbaB-like domain"/>
    <property type="match status" value="1"/>
</dbReference>
<dbReference type="HAMAP" id="MF_00274">
    <property type="entry name" value="DNA_YbaB_EbfC"/>
    <property type="match status" value="1"/>
</dbReference>
<dbReference type="InterPro" id="IPR036894">
    <property type="entry name" value="YbaB-like_sf"/>
</dbReference>
<dbReference type="InterPro" id="IPR004401">
    <property type="entry name" value="YbaB/EbfC"/>
</dbReference>
<dbReference type="NCBIfam" id="TIGR00103">
    <property type="entry name" value="DNA_YbaB_EbfC"/>
    <property type="match status" value="1"/>
</dbReference>
<dbReference type="PANTHER" id="PTHR33449">
    <property type="entry name" value="NUCLEOID-ASSOCIATED PROTEIN YBAB"/>
    <property type="match status" value="1"/>
</dbReference>
<dbReference type="PANTHER" id="PTHR33449:SF1">
    <property type="entry name" value="NUCLEOID-ASSOCIATED PROTEIN YBAB"/>
    <property type="match status" value="1"/>
</dbReference>
<dbReference type="Pfam" id="PF02575">
    <property type="entry name" value="YbaB_DNA_bd"/>
    <property type="match status" value="1"/>
</dbReference>
<dbReference type="PIRSF" id="PIRSF004555">
    <property type="entry name" value="UCP004555"/>
    <property type="match status" value="1"/>
</dbReference>
<dbReference type="SUPFAM" id="SSF82607">
    <property type="entry name" value="YbaB-like"/>
    <property type="match status" value="1"/>
</dbReference>
<name>Y2330_MYCLE</name>
<sequence length="116" mass="11932">MQPGGDMSALLAQAQQMQQKLLETQQQLANAQVHGQGGGGLVEVVVKGSGEVVSVAIDPKVVDPGDIETLQDLIVGAMADASKQVTKLAQERLGALTSAMRPTAPPPTPPTYMAGT</sequence>
<proteinExistence type="inferred from homology"/>
<keyword id="KW-0963">Cytoplasm</keyword>
<keyword id="KW-0238">DNA-binding</keyword>
<keyword id="KW-1185">Reference proteome</keyword>
<comment type="function">
    <text evidence="1">Binds to DNA and alters its conformation. May be involved in regulation of gene expression, nucleoid organization and DNA protection.</text>
</comment>
<comment type="subunit">
    <text evidence="1">Homodimer.</text>
</comment>
<comment type="subcellular location">
    <subcellularLocation>
        <location evidence="1">Cytoplasm</location>
        <location evidence="1">Nucleoid</location>
    </subcellularLocation>
</comment>
<comment type="similarity">
    <text evidence="1">Belongs to the YbaB/EbfC family.</text>
</comment>
<organism>
    <name type="scientific">Mycobacterium leprae (strain TN)</name>
    <dbReference type="NCBI Taxonomy" id="272631"/>
    <lineage>
        <taxon>Bacteria</taxon>
        <taxon>Bacillati</taxon>
        <taxon>Actinomycetota</taxon>
        <taxon>Actinomycetes</taxon>
        <taxon>Mycobacteriales</taxon>
        <taxon>Mycobacteriaceae</taxon>
        <taxon>Mycobacterium</taxon>
    </lineage>
</organism>
<feature type="chain" id="PRO_0000170411" description="Nucleoid-associated protein ML2330">
    <location>
        <begin position="1"/>
        <end position="116"/>
    </location>
</feature>
<feature type="region of interest" description="Disordered" evidence="2">
    <location>
        <begin position="96"/>
        <end position="116"/>
    </location>
</feature>